<evidence type="ECO:0000255" key="1">
    <source>
        <dbReference type="HAMAP-Rule" id="MF_00113"/>
    </source>
</evidence>
<feature type="chain" id="PRO_0000165431" description="S-adenosylmethionine:tRNA ribosyltransferase-isomerase">
    <location>
        <begin position="1"/>
        <end position="360"/>
    </location>
</feature>
<name>QUEA_RHIME</name>
<accession>Q92PY5</accession>
<protein>
    <recommendedName>
        <fullName evidence="1">S-adenosylmethionine:tRNA ribosyltransferase-isomerase</fullName>
        <ecNumber evidence="1">2.4.99.17</ecNumber>
    </recommendedName>
    <alternativeName>
        <fullName evidence="1">Queuosine biosynthesis protein QueA</fullName>
    </alternativeName>
</protein>
<gene>
    <name evidence="1" type="primary">queA</name>
    <name type="ordered locus">R01585</name>
    <name type="ORF">SMc01207</name>
</gene>
<dbReference type="EC" id="2.4.99.17" evidence="1"/>
<dbReference type="EMBL" id="AL591688">
    <property type="protein sequence ID" value="CAC46164.1"/>
    <property type="molecule type" value="Genomic_DNA"/>
</dbReference>
<dbReference type="RefSeq" id="NP_385691.1">
    <property type="nucleotide sequence ID" value="NC_003047.1"/>
</dbReference>
<dbReference type="RefSeq" id="WP_010969322.1">
    <property type="nucleotide sequence ID" value="NC_003047.1"/>
</dbReference>
<dbReference type="SMR" id="Q92PY5"/>
<dbReference type="EnsemblBacteria" id="CAC46164">
    <property type="protein sequence ID" value="CAC46164"/>
    <property type="gene ID" value="SMc01207"/>
</dbReference>
<dbReference type="KEGG" id="sme:SMc01207"/>
<dbReference type="PATRIC" id="fig|266834.11.peg.3013"/>
<dbReference type="eggNOG" id="COG0809">
    <property type="taxonomic scope" value="Bacteria"/>
</dbReference>
<dbReference type="HOGENOM" id="CLU_039110_1_1_5"/>
<dbReference type="OrthoDB" id="9805933at2"/>
<dbReference type="UniPathway" id="UPA00392"/>
<dbReference type="Proteomes" id="UP000001976">
    <property type="component" value="Chromosome"/>
</dbReference>
<dbReference type="GO" id="GO:0005737">
    <property type="term" value="C:cytoplasm"/>
    <property type="evidence" value="ECO:0007669"/>
    <property type="project" value="UniProtKB-SubCell"/>
</dbReference>
<dbReference type="GO" id="GO:0051075">
    <property type="term" value="F:S-adenosylmethionine:tRNA ribosyltransferase-isomerase activity"/>
    <property type="evidence" value="ECO:0007669"/>
    <property type="project" value="UniProtKB-EC"/>
</dbReference>
<dbReference type="GO" id="GO:0008616">
    <property type="term" value="P:queuosine biosynthetic process"/>
    <property type="evidence" value="ECO:0007669"/>
    <property type="project" value="UniProtKB-UniRule"/>
</dbReference>
<dbReference type="GO" id="GO:0002099">
    <property type="term" value="P:tRNA wobble guanine modification"/>
    <property type="evidence" value="ECO:0007669"/>
    <property type="project" value="TreeGrafter"/>
</dbReference>
<dbReference type="Gene3D" id="2.40.10.240">
    <property type="entry name" value="QueA-like"/>
    <property type="match status" value="1"/>
</dbReference>
<dbReference type="Gene3D" id="3.40.1780.10">
    <property type="entry name" value="QueA-like"/>
    <property type="match status" value="1"/>
</dbReference>
<dbReference type="HAMAP" id="MF_00113">
    <property type="entry name" value="QueA"/>
    <property type="match status" value="1"/>
</dbReference>
<dbReference type="InterPro" id="IPR003699">
    <property type="entry name" value="QueA"/>
</dbReference>
<dbReference type="InterPro" id="IPR042118">
    <property type="entry name" value="QueA_dom1"/>
</dbReference>
<dbReference type="InterPro" id="IPR042119">
    <property type="entry name" value="QueA_dom2"/>
</dbReference>
<dbReference type="InterPro" id="IPR036100">
    <property type="entry name" value="QueA_sf"/>
</dbReference>
<dbReference type="NCBIfam" id="NF001140">
    <property type="entry name" value="PRK00147.1"/>
    <property type="match status" value="1"/>
</dbReference>
<dbReference type="NCBIfam" id="TIGR00113">
    <property type="entry name" value="queA"/>
    <property type="match status" value="1"/>
</dbReference>
<dbReference type="PANTHER" id="PTHR30307">
    <property type="entry name" value="S-ADENOSYLMETHIONINE:TRNA RIBOSYLTRANSFERASE-ISOMERASE"/>
    <property type="match status" value="1"/>
</dbReference>
<dbReference type="PANTHER" id="PTHR30307:SF0">
    <property type="entry name" value="S-ADENOSYLMETHIONINE:TRNA RIBOSYLTRANSFERASE-ISOMERASE"/>
    <property type="match status" value="1"/>
</dbReference>
<dbReference type="Pfam" id="PF02547">
    <property type="entry name" value="Queuosine_synth"/>
    <property type="match status" value="1"/>
</dbReference>
<dbReference type="SUPFAM" id="SSF111337">
    <property type="entry name" value="QueA-like"/>
    <property type="match status" value="1"/>
</dbReference>
<organism>
    <name type="scientific">Rhizobium meliloti (strain 1021)</name>
    <name type="common">Ensifer meliloti</name>
    <name type="synonym">Sinorhizobium meliloti</name>
    <dbReference type="NCBI Taxonomy" id="266834"/>
    <lineage>
        <taxon>Bacteria</taxon>
        <taxon>Pseudomonadati</taxon>
        <taxon>Pseudomonadota</taxon>
        <taxon>Alphaproteobacteria</taxon>
        <taxon>Hyphomicrobiales</taxon>
        <taxon>Rhizobiaceae</taxon>
        <taxon>Sinorhizobium/Ensifer group</taxon>
        <taxon>Sinorhizobium</taxon>
    </lineage>
</organism>
<sequence>MRVDLFDFDLPENSIALRPASPRDSARMLVVRPDGAPVLEDRGVLDLPSFLRPGDALVFNDTKVIPAQLEGVRYRGEDISTPVSLTLHMRVAPSRWKAFARPARRLKPGDRISFGHGGSACLLGSLEAVVEEKGDAGEVTLRFDLSGPSLDEAIMAVGHIPLPPYIASKRADDERDRTDYQTVYAREEGAVAAPTAGLHFTDRLFAKLDEGGIERYFVTLHVGAGTFLPVKADDTADHVMHEEIGHVDPVTAAKLNAVRERGGRIVCVGTTSLRLIESAAAEDGNIRPWSGATGIFITPGYRFRAVDMLMTNFHLPKSTLFMLVSAFAGLETMHAAYAHAIATGYRFYSYGDSSLLFRKD</sequence>
<reference key="1">
    <citation type="journal article" date="2001" name="Proc. Natl. Acad. Sci. U.S.A.">
        <title>Analysis of the chromosome sequence of the legume symbiont Sinorhizobium meliloti strain 1021.</title>
        <authorList>
            <person name="Capela D."/>
            <person name="Barloy-Hubler F."/>
            <person name="Gouzy J."/>
            <person name="Bothe G."/>
            <person name="Ampe F."/>
            <person name="Batut J."/>
            <person name="Boistard P."/>
            <person name="Becker A."/>
            <person name="Boutry M."/>
            <person name="Cadieu E."/>
            <person name="Dreano S."/>
            <person name="Gloux S."/>
            <person name="Godrie T."/>
            <person name="Goffeau A."/>
            <person name="Kahn D."/>
            <person name="Kiss E."/>
            <person name="Lelaure V."/>
            <person name="Masuy D."/>
            <person name="Pohl T."/>
            <person name="Portetelle D."/>
            <person name="Puehler A."/>
            <person name="Purnelle B."/>
            <person name="Ramsperger U."/>
            <person name="Renard C."/>
            <person name="Thebault P."/>
            <person name="Vandenbol M."/>
            <person name="Weidner S."/>
            <person name="Galibert F."/>
        </authorList>
    </citation>
    <scope>NUCLEOTIDE SEQUENCE [LARGE SCALE GENOMIC DNA]</scope>
    <source>
        <strain>1021</strain>
    </source>
</reference>
<reference key="2">
    <citation type="journal article" date="2001" name="Science">
        <title>The composite genome of the legume symbiont Sinorhizobium meliloti.</title>
        <authorList>
            <person name="Galibert F."/>
            <person name="Finan T.M."/>
            <person name="Long S.R."/>
            <person name="Puehler A."/>
            <person name="Abola P."/>
            <person name="Ampe F."/>
            <person name="Barloy-Hubler F."/>
            <person name="Barnett M.J."/>
            <person name="Becker A."/>
            <person name="Boistard P."/>
            <person name="Bothe G."/>
            <person name="Boutry M."/>
            <person name="Bowser L."/>
            <person name="Buhrmester J."/>
            <person name="Cadieu E."/>
            <person name="Capela D."/>
            <person name="Chain P."/>
            <person name="Cowie A."/>
            <person name="Davis R.W."/>
            <person name="Dreano S."/>
            <person name="Federspiel N.A."/>
            <person name="Fisher R.F."/>
            <person name="Gloux S."/>
            <person name="Godrie T."/>
            <person name="Goffeau A."/>
            <person name="Golding B."/>
            <person name="Gouzy J."/>
            <person name="Gurjal M."/>
            <person name="Hernandez-Lucas I."/>
            <person name="Hong A."/>
            <person name="Huizar L."/>
            <person name="Hyman R.W."/>
            <person name="Jones T."/>
            <person name="Kahn D."/>
            <person name="Kahn M.L."/>
            <person name="Kalman S."/>
            <person name="Keating D.H."/>
            <person name="Kiss E."/>
            <person name="Komp C."/>
            <person name="Lelaure V."/>
            <person name="Masuy D."/>
            <person name="Palm C."/>
            <person name="Peck M.C."/>
            <person name="Pohl T.M."/>
            <person name="Portetelle D."/>
            <person name="Purnelle B."/>
            <person name="Ramsperger U."/>
            <person name="Surzycki R."/>
            <person name="Thebault P."/>
            <person name="Vandenbol M."/>
            <person name="Vorhoelter F.J."/>
            <person name="Weidner S."/>
            <person name="Wells D.H."/>
            <person name="Wong K."/>
            <person name="Yeh K.-C."/>
            <person name="Batut J."/>
        </authorList>
    </citation>
    <scope>NUCLEOTIDE SEQUENCE [LARGE SCALE GENOMIC DNA]</scope>
    <source>
        <strain>1021</strain>
    </source>
</reference>
<proteinExistence type="inferred from homology"/>
<keyword id="KW-0963">Cytoplasm</keyword>
<keyword id="KW-0671">Queuosine biosynthesis</keyword>
<keyword id="KW-1185">Reference proteome</keyword>
<keyword id="KW-0949">S-adenosyl-L-methionine</keyword>
<keyword id="KW-0808">Transferase</keyword>
<comment type="function">
    <text evidence="1">Transfers and isomerizes the ribose moiety from AdoMet to the 7-aminomethyl group of 7-deazaguanine (preQ1-tRNA) to give epoxyqueuosine (oQ-tRNA).</text>
</comment>
<comment type="catalytic activity">
    <reaction evidence="1">
        <text>7-aminomethyl-7-carbaguanosine(34) in tRNA + S-adenosyl-L-methionine = epoxyqueuosine(34) in tRNA + adenine + L-methionine + 2 H(+)</text>
        <dbReference type="Rhea" id="RHEA:32155"/>
        <dbReference type="Rhea" id="RHEA-COMP:10342"/>
        <dbReference type="Rhea" id="RHEA-COMP:18582"/>
        <dbReference type="ChEBI" id="CHEBI:15378"/>
        <dbReference type="ChEBI" id="CHEBI:16708"/>
        <dbReference type="ChEBI" id="CHEBI:57844"/>
        <dbReference type="ChEBI" id="CHEBI:59789"/>
        <dbReference type="ChEBI" id="CHEBI:82833"/>
        <dbReference type="ChEBI" id="CHEBI:194443"/>
        <dbReference type="EC" id="2.4.99.17"/>
    </reaction>
</comment>
<comment type="pathway">
    <text evidence="1">tRNA modification; tRNA-queuosine biosynthesis.</text>
</comment>
<comment type="subunit">
    <text evidence="1">Monomer.</text>
</comment>
<comment type="subcellular location">
    <subcellularLocation>
        <location evidence="1">Cytoplasm</location>
    </subcellularLocation>
</comment>
<comment type="similarity">
    <text evidence="1">Belongs to the QueA family.</text>
</comment>